<comment type="function">
    <text evidence="1">Required for the insertion and/or proper folding and/or complex formation of integral membrane proteins into the membrane. Involved in integration of membrane proteins that insert both dependently and independently of the Sec translocase complex, as well as at least some lipoproteins. Aids folding of multispanning membrane proteins.</text>
</comment>
<comment type="subunit">
    <text evidence="1">Interacts with the Sec translocase complex via SecD. Specifically interacts with transmembrane segments of nascent integral membrane proteins during membrane integration.</text>
</comment>
<comment type="subcellular location">
    <subcellularLocation>
        <location evidence="1">Cell inner membrane</location>
        <topology evidence="1">Multi-pass membrane protein</topology>
    </subcellularLocation>
</comment>
<comment type="similarity">
    <text evidence="1">Belongs to the OXA1/ALB3/YidC family. Type 1 subfamily.</text>
</comment>
<proteinExistence type="inferred from homology"/>
<gene>
    <name evidence="1" type="primary">yidC</name>
    <name type="ordered locus">FTM_1616</name>
</gene>
<dbReference type="EMBL" id="CP000915">
    <property type="protein sequence ID" value="ACD31424.1"/>
    <property type="molecule type" value="Genomic_DNA"/>
</dbReference>
<dbReference type="SMR" id="B2SE60"/>
<dbReference type="KEGG" id="ftm:FTM_1616"/>
<dbReference type="HOGENOM" id="CLU_016535_3_0_6"/>
<dbReference type="GO" id="GO:0005886">
    <property type="term" value="C:plasma membrane"/>
    <property type="evidence" value="ECO:0007669"/>
    <property type="project" value="UniProtKB-SubCell"/>
</dbReference>
<dbReference type="GO" id="GO:0032977">
    <property type="term" value="F:membrane insertase activity"/>
    <property type="evidence" value="ECO:0007669"/>
    <property type="project" value="InterPro"/>
</dbReference>
<dbReference type="GO" id="GO:0051205">
    <property type="term" value="P:protein insertion into membrane"/>
    <property type="evidence" value="ECO:0007669"/>
    <property type="project" value="TreeGrafter"/>
</dbReference>
<dbReference type="GO" id="GO:0015031">
    <property type="term" value="P:protein transport"/>
    <property type="evidence" value="ECO:0007669"/>
    <property type="project" value="UniProtKB-KW"/>
</dbReference>
<dbReference type="CDD" id="cd20070">
    <property type="entry name" value="5TM_YidC_Alb3"/>
    <property type="match status" value="1"/>
</dbReference>
<dbReference type="CDD" id="cd19961">
    <property type="entry name" value="EcYidC-like_peri"/>
    <property type="match status" value="1"/>
</dbReference>
<dbReference type="Gene3D" id="2.70.98.90">
    <property type="match status" value="1"/>
</dbReference>
<dbReference type="HAMAP" id="MF_01810">
    <property type="entry name" value="YidC_type1"/>
    <property type="match status" value="1"/>
</dbReference>
<dbReference type="InterPro" id="IPR019998">
    <property type="entry name" value="Membr_insert_YidC"/>
</dbReference>
<dbReference type="InterPro" id="IPR028053">
    <property type="entry name" value="Membr_insert_YidC_N"/>
</dbReference>
<dbReference type="InterPro" id="IPR001708">
    <property type="entry name" value="YidC/ALB3/OXA1/COX18"/>
</dbReference>
<dbReference type="InterPro" id="IPR028055">
    <property type="entry name" value="YidC/Oxa/ALB_C"/>
</dbReference>
<dbReference type="InterPro" id="IPR047196">
    <property type="entry name" value="YidC_ALB_C"/>
</dbReference>
<dbReference type="InterPro" id="IPR038221">
    <property type="entry name" value="YidC_periplasmic_sf"/>
</dbReference>
<dbReference type="NCBIfam" id="NF002352">
    <property type="entry name" value="PRK01318.1-3"/>
    <property type="match status" value="1"/>
</dbReference>
<dbReference type="NCBIfam" id="TIGR03593">
    <property type="entry name" value="yidC_nterm"/>
    <property type="match status" value="1"/>
</dbReference>
<dbReference type="NCBIfam" id="TIGR03592">
    <property type="entry name" value="yidC_oxa1_cterm"/>
    <property type="match status" value="1"/>
</dbReference>
<dbReference type="PANTHER" id="PTHR12428:SF65">
    <property type="entry name" value="CYTOCHROME C OXIDASE ASSEMBLY PROTEIN COX18, MITOCHONDRIAL"/>
    <property type="match status" value="1"/>
</dbReference>
<dbReference type="PANTHER" id="PTHR12428">
    <property type="entry name" value="OXA1"/>
    <property type="match status" value="1"/>
</dbReference>
<dbReference type="Pfam" id="PF02096">
    <property type="entry name" value="60KD_IMP"/>
    <property type="match status" value="1"/>
</dbReference>
<dbReference type="Pfam" id="PF14849">
    <property type="entry name" value="YidC_periplas"/>
    <property type="match status" value="1"/>
</dbReference>
<dbReference type="PRINTS" id="PR00701">
    <property type="entry name" value="60KDINNERMP"/>
</dbReference>
<dbReference type="PRINTS" id="PR01900">
    <property type="entry name" value="YIDCPROTEIN"/>
</dbReference>
<organism>
    <name type="scientific">Francisella tularensis subsp. mediasiatica (strain FSC147)</name>
    <dbReference type="NCBI Taxonomy" id="441952"/>
    <lineage>
        <taxon>Bacteria</taxon>
        <taxon>Pseudomonadati</taxon>
        <taxon>Pseudomonadota</taxon>
        <taxon>Gammaproteobacteria</taxon>
        <taxon>Thiotrichales</taxon>
        <taxon>Francisellaceae</taxon>
        <taxon>Francisella</taxon>
    </lineage>
</organism>
<keyword id="KW-0997">Cell inner membrane</keyword>
<keyword id="KW-1003">Cell membrane</keyword>
<keyword id="KW-0143">Chaperone</keyword>
<keyword id="KW-0472">Membrane</keyword>
<keyword id="KW-0653">Protein transport</keyword>
<keyword id="KW-0812">Transmembrane</keyword>
<keyword id="KW-1133">Transmembrane helix</keyword>
<keyword id="KW-0813">Transport</keyword>
<feature type="chain" id="PRO_1000187668" description="Membrane protein insertase YidC">
    <location>
        <begin position="1"/>
        <end position="551"/>
    </location>
</feature>
<feature type="transmembrane region" description="Helical" evidence="1">
    <location>
        <begin position="3"/>
        <end position="23"/>
    </location>
</feature>
<feature type="transmembrane region" description="Helical" evidence="1">
    <location>
        <begin position="361"/>
        <end position="381"/>
    </location>
</feature>
<feature type="transmembrane region" description="Helical" evidence="1">
    <location>
        <begin position="431"/>
        <end position="451"/>
    </location>
</feature>
<feature type="transmembrane region" description="Helical" evidence="1">
    <location>
        <begin position="504"/>
        <end position="524"/>
    </location>
</feature>
<feature type="region of interest" description="Disordered" evidence="2">
    <location>
        <begin position="33"/>
        <end position="59"/>
    </location>
</feature>
<feature type="compositionally biased region" description="Polar residues" evidence="2">
    <location>
        <begin position="33"/>
        <end position="47"/>
    </location>
</feature>
<feature type="compositionally biased region" description="Low complexity" evidence="2">
    <location>
        <begin position="50"/>
        <end position="59"/>
    </location>
</feature>
<name>YIDC_FRATM</name>
<reference key="1">
    <citation type="journal article" date="2009" name="PLoS Pathog.">
        <title>Molecular evolutionary consequences of niche restriction in Francisella tularensis, a facultative intracellular pathogen.</title>
        <authorList>
            <person name="Larsson P."/>
            <person name="Elfsmark D."/>
            <person name="Svensson K."/>
            <person name="Wikstroem P."/>
            <person name="Forsman M."/>
            <person name="Brettin T."/>
            <person name="Keim P."/>
            <person name="Johansson A."/>
        </authorList>
    </citation>
    <scope>NUCLEOTIDE SEQUENCE [LARGE SCALE GENOMIC DNA]</scope>
    <source>
        <strain>FSC147</strain>
    </source>
</reference>
<sequence>MKANHIRILLLVTIAIMFISLMGKWEQTFPADNTKQQTSATQNNSHYDNADSSTNTDVTTTDAKSSLAKETNFSKYDNAKSITINTGVFKDVKVSLLDGAIISASLKDYSISLDDKTPMSLLTDKSGSEYIAKSTIVVNKQPISVNFEDQGIKIENGKQILTLTGSADGLQITRTYTFDDTKYNISVSQNIKNTTSAPVNVIVDDSFARGFDPAGDSFSLLNAHSYTFTGVAYSTAKDSFRKESFKDISKTNGQPTVINSDGQGWVAFLQHYFVSAWIPQSTNAKIYYKNLNGDVFEAGAFTGATIAPNQSENISSILYTGPIIKANLVDLAPNLEKTLDYGMLSFFSEIIFWVMNHIHSLVGNWGLAIILVTCLIKLIFYPLSAKSYRSMAKMRMLQPRIKRLQETYKDDRQALGKKMMELYKEEKVNPLSGCLPMLIQIPIFISLYWVLLESVELRQAPFIFWIHDLSMKDPYFVLPVLMGLSMFLQQKLSPAPADPMQAKVMMFLPVIFTFLFASFPSGLVLYWLTNNLISISQQWIITRHYQATHKK</sequence>
<protein>
    <recommendedName>
        <fullName evidence="1">Membrane protein insertase YidC</fullName>
    </recommendedName>
    <alternativeName>
        <fullName evidence="1">Foldase YidC</fullName>
    </alternativeName>
    <alternativeName>
        <fullName evidence="1">Membrane integrase YidC</fullName>
    </alternativeName>
    <alternativeName>
        <fullName evidence="1">Membrane protein YidC</fullName>
    </alternativeName>
</protein>
<evidence type="ECO:0000255" key="1">
    <source>
        <dbReference type="HAMAP-Rule" id="MF_01810"/>
    </source>
</evidence>
<evidence type="ECO:0000256" key="2">
    <source>
        <dbReference type="SAM" id="MobiDB-lite"/>
    </source>
</evidence>
<accession>B2SE60</accession>